<sequence>MYNTTPLNFAINQENNEEVIKYLLANGANPRLALVDIIEAGNNNALNLLMKVAPSITVDEVFPQVMAMGMRRFFQAVQNKDLSAIKDFI</sequence>
<protein>
    <recommendedName>
        <fullName>Putative ankyrin repeat protein RF_1157</fullName>
    </recommendedName>
</protein>
<proteinExistence type="predicted"/>
<keyword id="KW-0040">ANK repeat</keyword>
<feature type="chain" id="PRO_0000281761" description="Putative ankyrin repeat protein RF_1157">
    <location>
        <begin position="1"/>
        <end position="89"/>
    </location>
</feature>
<feature type="repeat" description="ANK">
    <location>
        <begin position="2"/>
        <end position="32"/>
    </location>
</feature>
<accession>Q4UJM3</accession>
<dbReference type="EMBL" id="CP000053">
    <property type="protein sequence ID" value="AAY62008.1"/>
    <property type="molecule type" value="Genomic_DNA"/>
</dbReference>
<dbReference type="SMR" id="Q4UJM3"/>
<dbReference type="STRING" id="315456.RF_1157"/>
<dbReference type="KEGG" id="rfe:RF_1157"/>
<dbReference type="HOGENOM" id="CLU_2452683_0_0_5"/>
<dbReference type="Proteomes" id="UP000008548">
    <property type="component" value="Chromosome"/>
</dbReference>
<dbReference type="Gene3D" id="1.25.40.20">
    <property type="entry name" value="Ankyrin repeat-containing domain"/>
    <property type="match status" value="1"/>
</dbReference>
<dbReference type="InterPro" id="IPR002110">
    <property type="entry name" value="Ankyrin_rpt"/>
</dbReference>
<dbReference type="InterPro" id="IPR036770">
    <property type="entry name" value="Ankyrin_rpt-contain_sf"/>
</dbReference>
<dbReference type="Pfam" id="PF00023">
    <property type="entry name" value="Ank"/>
    <property type="match status" value="1"/>
</dbReference>
<dbReference type="PROSITE" id="PS50297">
    <property type="entry name" value="ANK_REP_REGION"/>
    <property type="match status" value="1"/>
</dbReference>
<dbReference type="PROSITE" id="PS50088">
    <property type="entry name" value="ANK_REPEAT"/>
    <property type="match status" value="1"/>
</dbReference>
<gene>
    <name type="ordered locus">RF_1157</name>
</gene>
<name>Y1157_RICFE</name>
<organism>
    <name type="scientific">Rickettsia felis (strain ATCC VR-1525 / URRWXCal2)</name>
    <name type="common">Rickettsia azadi</name>
    <dbReference type="NCBI Taxonomy" id="315456"/>
    <lineage>
        <taxon>Bacteria</taxon>
        <taxon>Pseudomonadati</taxon>
        <taxon>Pseudomonadota</taxon>
        <taxon>Alphaproteobacteria</taxon>
        <taxon>Rickettsiales</taxon>
        <taxon>Rickettsiaceae</taxon>
        <taxon>Rickettsieae</taxon>
        <taxon>Rickettsia</taxon>
        <taxon>spotted fever group</taxon>
    </lineage>
</organism>
<reference key="1">
    <citation type="journal article" date="2005" name="PLoS Biol.">
        <title>The genome sequence of Rickettsia felis identifies the first putative conjugative plasmid in an obligate intracellular parasite.</title>
        <authorList>
            <person name="Ogata H."/>
            <person name="Renesto P."/>
            <person name="Audic S."/>
            <person name="Robert C."/>
            <person name="Blanc G."/>
            <person name="Fournier P.-E."/>
            <person name="Parinello H."/>
            <person name="Claverie J.-M."/>
            <person name="Raoult D."/>
        </authorList>
    </citation>
    <scope>NUCLEOTIDE SEQUENCE [LARGE SCALE GENOMIC DNA]</scope>
    <source>
        <strain>ATCC VR-1525 / URRWXCal2</strain>
    </source>
</reference>